<comment type="function">
    <text>Required for the synthesis of autoinducer molecules which bind to RaiR and that are involved in the restriction of nodule number.</text>
</comment>
<comment type="catalytic activity">
    <reaction>
        <text>a fatty acyl-[ACP] + S-adenosyl-L-methionine = an N-acyl-L-homoserine lactone + S-methyl-5'-thioadenosine + holo-[ACP] + H(+)</text>
        <dbReference type="Rhea" id="RHEA:10096"/>
        <dbReference type="Rhea" id="RHEA-COMP:9685"/>
        <dbReference type="Rhea" id="RHEA-COMP:14125"/>
        <dbReference type="ChEBI" id="CHEBI:15378"/>
        <dbReference type="ChEBI" id="CHEBI:17509"/>
        <dbReference type="ChEBI" id="CHEBI:55474"/>
        <dbReference type="ChEBI" id="CHEBI:59789"/>
        <dbReference type="ChEBI" id="CHEBI:64479"/>
        <dbReference type="ChEBI" id="CHEBI:138651"/>
        <dbReference type="EC" id="2.3.1.184"/>
    </reaction>
</comment>
<comment type="similarity">
    <text evidence="1">Belongs to the autoinducer synthase family.</text>
</comment>
<feature type="chain" id="PRO_0000210893" description="Acyl-homoserine-lactone synthase">
    <location>
        <begin position="1"/>
        <end position="212"/>
    </location>
</feature>
<dbReference type="EC" id="2.3.1.184"/>
<dbReference type="EMBL" id="AY708656">
    <property type="protein sequence ID" value="AAC38172.1"/>
    <property type="molecule type" value="Genomic_DNA"/>
</dbReference>
<dbReference type="SMR" id="O54451"/>
<dbReference type="GO" id="GO:0061579">
    <property type="term" value="F:N-acyl homoserine lactone synthase activity"/>
    <property type="evidence" value="ECO:0007669"/>
    <property type="project" value="UniProtKB-EC"/>
</dbReference>
<dbReference type="GO" id="GO:0009372">
    <property type="term" value="P:quorum sensing"/>
    <property type="evidence" value="ECO:0007669"/>
    <property type="project" value="UniProtKB-KW"/>
</dbReference>
<dbReference type="GO" id="GO:0007165">
    <property type="term" value="P:signal transduction"/>
    <property type="evidence" value="ECO:0007669"/>
    <property type="project" value="TreeGrafter"/>
</dbReference>
<dbReference type="Gene3D" id="3.40.630.30">
    <property type="match status" value="1"/>
</dbReference>
<dbReference type="InterPro" id="IPR016181">
    <property type="entry name" value="Acyl_CoA_acyltransferase"/>
</dbReference>
<dbReference type="InterPro" id="IPR018311">
    <property type="entry name" value="Autoind_synth_CS"/>
</dbReference>
<dbReference type="InterPro" id="IPR001690">
    <property type="entry name" value="Autoind_synthase"/>
</dbReference>
<dbReference type="PANTHER" id="PTHR39322">
    <property type="entry name" value="ACYL-HOMOSERINE-LACTONE SYNTHASE"/>
    <property type="match status" value="1"/>
</dbReference>
<dbReference type="PANTHER" id="PTHR39322:SF1">
    <property type="entry name" value="ISOVALERYL-HOMOSERINE LACTONE SYNTHASE"/>
    <property type="match status" value="1"/>
</dbReference>
<dbReference type="Pfam" id="PF00765">
    <property type="entry name" value="Autoind_synth"/>
    <property type="match status" value="1"/>
</dbReference>
<dbReference type="PRINTS" id="PR01549">
    <property type="entry name" value="AUTOINDCRSYN"/>
</dbReference>
<dbReference type="SUPFAM" id="SSF55729">
    <property type="entry name" value="Acyl-CoA N-acyltransferases (Nat)"/>
    <property type="match status" value="1"/>
</dbReference>
<dbReference type="PROSITE" id="PS00949">
    <property type="entry name" value="AUTOINDUCER_SYNTH_1"/>
    <property type="match status" value="1"/>
</dbReference>
<dbReference type="PROSITE" id="PS51187">
    <property type="entry name" value="AUTOINDUCER_SYNTH_2"/>
    <property type="match status" value="1"/>
</dbReference>
<gene>
    <name type="primary">raiI</name>
</gene>
<protein>
    <recommendedName>
        <fullName>Acyl-homoserine-lactone synthase</fullName>
        <ecNumber>2.3.1.184</ecNumber>
    </recommendedName>
    <alternativeName>
        <fullName>Autoinducer synthesis protein RaiI</fullName>
    </alternativeName>
</protein>
<evidence type="ECO:0000255" key="1">
    <source>
        <dbReference type="PROSITE-ProRule" id="PRU00533"/>
    </source>
</evidence>
<sequence length="212" mass="24209">MLRILTKDMLETDRRAFDEMFRARAAVFRDRLGWQVDVRDQWERDRYDEAEDPVYLVTQQPSGTLTGSLRLLPTTGATMLKSEFRHFFDQPIDVDSPTTWECTRFCLHPHAGDMKQSRAVATELLSGLCDLALDTGIENIVGVYDVAMVAVYRRIGWRPTPLARSRPEIGKLYVGLWDVTADNCRTLRANLSRLLEQASPYPARVLVDGGMR</sequence>
<reference key="1">
    <citation type="journal article" date="1998" name="J. Bacteriol.">
        <title>luxI- and luxR-homologous genes of Rhizobium etli CNPAF512 contribute to synthesis of autoinducer molecules and nodulation of Phaseolus vulgaris.</title>
        <authorList>
            <person name="Rosemeyer V."/>
            <person name="Michiels J."/>
            <person name="Verreth C."/>
            <person name="Vanderleyden J."/>
        </authorList>
    </citation>
    <scope>NUCLEOTIDE SEQUENCE [GENOMIC DNA]</scope>
    <source>
        <strain>CNPAF512</strain>
    </source>
</reference>
<name>RAII_RHIET</name>
<organism>
    <name type="scientific">Rhizobium etli</name>
    <dbReference type="NCBI Taxonomy" id="29449"/>
    <lineage>
        <taxon>Bacteria</taxon>
        <taxon>Pseudomonadati</taxon>
        <taxon>Pseudomonadota</taxon>
        <taxon>Alphaproteobacteria</taxon>
        <taxon>Hyphomicrobiales</taxon>
        <taxon>Rhizobiaceae</taxon>
        <taxon>Rhizobium/Agrobacterium group</taxon>
        <taxon>Rhizobium</taxon>
    </lineage>
</organism>
<proteinExistence type="inferred from homology"/>
<accession>O54451</accession>
<keyword id="KW-0071">Autoinducer synthesis</keyword>
<keyword id="KW-0536">Nodulation</keyword>
<keyword id="KW-0673">Quorum sensing</keyword>
<keyword id="KW-0949">S-adenosyl-L-methionine</keyword>
<keyword id="KW-0808">Transferase</keyword>